<sequence>MTTLSPENSLSARRSATFILEKRNPPIDKAEWDSFFDENGHLAKSRDFICINILERGLHPFVRTEAWKFLTGYYSWQSSRDERLMVDSNRRRNYNSLCQMYEKIQPLLENLHGNFTETRNNIAYDIQRLYDKDPLGNVLIDKKKLEKTLLLSYVCNTKAEYQRGFHEMVMLFQLMVEHDHETFWLFQFFLQKTEHSCVINIGVGKNLDMLNSLITLLDPEFAEHLKGKGSGAVQSLFPWFCLCFQRAFKTFDDVWRLWEVLLTGKPCRNFQVLVAYSMLQMVREQALLECMSGDAILMACNNLIDLDADELISAACVVYSELMQKEVPQPLKEFLL</sequence>
<gene>
    <name evidence="14" type="primary">Tbc1d21</name>
    <name evidence="7" type="synonym">MgcRabGAP</name>
</gene>
<accession>Q9D9D3</accession>
<accession>B7ZNH3</accession>
<evidence type="ECO:0000250" key="1">
    <source>
        <dbReference type="UniProtKB" id="Q8IYX1"/>
    </source>
</evidence>
<evidence type="ECO:0000255" key="2">
    <source>
        <dbReference type="PROSITE-ProRule" id="PRU00163"/>
    </source>
</evidence>
<evidence type="ECO:0000269" key="3">
    <source>
    </source>
</evidence>
<evidence type="ECO:0000269" key="4">
    <source>
    </source>
</evidence>
<evidence type="ECO:0000269" key="5">
    <source>
    </source>
</evidence>
<evidence type="ECO:0000269" key="6">
    <source>
    </source>
</evidence>
<evidence type="ECO:0000303" key="7">
    <source>
    </source>
</evidence>
<evidence type="ECO:0000305" key="8"/>
<evidence type="ECO:0000305" key="9">
    <source>
    </source>
</evidence>
<evidence type="ECO:0000312" key="10">
    <source>
        <dbReference type="EMBL" id="AAI00469.1"/>
    </source>
</evidence>
<evidence type="ECO:0000312" key="11">
    <source>
        <dbReference type="EMBL" id="AAI45240.1"/>
    </source>
</evidence>
<evidence type="ECO:0000312" key="12">
    <source>
        <dbReference type="EMBL" id="BAB24855.1"/>
    </source>
</evidence>
<evidence type="ECO:0000312" key="13">
    <source>
        <dbReference type="EMBL" id="EDL25950.1"/>
    </source>
</evidence>
<evidence type="ECO:0000312" key="14">
    <source>
        <dbReference type="MGI" id="MGI:1921536"/>
    </source>
</evidence>
<evidence type="ECO:0000312" key="15">
    <source>
        <dbReference type="Proteomes" id="UP000000589"/>
    </source>
</evidence>
<proteinExistence type="evidence at protein level"/>
<comment type="function">
    <text evidence="4 5 6 9">Acts as a GTPase-activating protein for Rab family protein (s) (PubMed:30360518). Essential for the establishment of male fertility, and is required for both the production of normal sperm number and sperm function (PubMed:32976492). Plays an important role in the formation of intact mitochondria, outer dense fibers and axoneme within the sperm tail (PubMed:32976492). Essential for sperm mitochondrial sheath formation and for the interactions of ARMC12 with VDAC2 and VDAC3 (PubMed:33536340). May be involved in acrosome formation and cytoskeletal reorganization during spermiogenesis, possibly by regulating RAB3A activity (PubMed:21128978).</text>
</comment>
<comment type="subunit">
    <text evidence="1 3 4 5 6">Interacts with ACTB (PubMed:21128978). Interacts with ARMC12 (PubMed:33536340). Interacts with TOMM20 and DNAH7 (PubMed:32976492). Interacts with RAP1A (PubMed:30360518). Interacts with RAB10 (By similarity).</text>
</comment>
<comment type="subcellular location">
    <subcellularLocation>
        <location evidence="3">Cytoplasmic vesicle</location>
        <location evidence="3">Secretory vesicle</location>
        <location evidence="3">Acrosome</location>
    </subcellularLocation>
    <subcellularLocation>
        <location evidence="3">Cytoplasm</location>
        <location evidence="3">Cytoskeleton</location>
    </subcellularLocation>
    <text evidence="3">Located at the edge of the acrosomal region, neck and annulus during spermiogenesis. Colocalizes with RAB3A at the acrosome-acroplaxome and neck regions of spermatids. Colocalizes with ACTB at the neck region in elongated spermatids.</text>
</comment>
<comment type="tissue specificity">
    <text evidence="3 4 5 6">Expressed in testis, specifically in elongating and elongated spermatids (at protein level) (PubMed:21128978, PubMed:30360518, PubMed:33536340). Expressed in the sperm midpiece (at protein level) (PubMed:32976492, PubMed:33536340).</text>
</comment>
<comment type="developmental stage">
    <text evidence="3 4">Detected from postnatal day 35 onward.</text>
</comment>
<comment type="disruption phenotype">
    <text evidence="5 6">Male mice are sterile, characterized by defects in sperm tail structure and diminished sperm motility (PubMed:32976492, PubMed:33536340). The mitochondria of the sperm-tail has an abnormal irregular arrangement, abnormal diameter, and structural defects and the axoneme structure of sperm tails is severely disturbed (PubMed:32976492). Sperm mitochondria cannot form a proper mitochondrial sheath at the subsequent mitochondrial compaction step, although they can coil around the flagellum (PubMed:33536340).</text>
</comment>
<protein>
    <recommendedName>
        <fullName evidence="14">TBC1 domain family member 21</fullName>
    </recommendedName>
    <alternativeName>
        <fullName evidence="7">Male germ cell Rab GTPase-activating protein</fullName>
    </alternativeName>
</protein>
<keyword id="KW-0963">Cytoplasm</keyword>
<keyword id="KW-0968">Cytoplasmic vesicle</keyword>
<keyword id="KW-0206">Cytoskeleton</keyword>
<keyword id="KW-0221">Differentiation</keyword>
<keyword id="KW-0343">GTPase activation</keyword>
<keyword id="KW-1185">Reference proteome</keyword>
<keyword id="KW-0744">Spermatogenesis</keyword>
<organism evidence="11">
    <name type="scientific">Mus musculus</name>
    <name type="common">Mouse</name>
    <dbReference type="NCBI Taxonomy" id="10090"/>
    <lineage>
        <taxon>Eukaryota</taxon>
        <taxon>Metazoa</taxon>
        <taxon>Chordata</taxon>
        <taxon>Craniata</taxon>
        <taxon>Vertebrata</taxon>
        <taxon>Euteleostomi</taxon>
        <taxon>Mammalia</taxon>
        <taxon>Eutheria</taxon>
        <taxon>Euarchontoglires</taxon>
        <taxon>Glires</taxon>
        <taxon>Rodentia</taxon>
        <taxon>Myomorpha</taxon>
        <taxon>Muroidea</taxon>
        <taxon>Muridae</taxon>
        <taxon>Murinae</taxon>
        <taxon>Mus</taxon>
        <taxon>Mus</taxon>
    </lineage>
</organism>
<name>TBC21_MOUSE</name>
<feature type="chain" id="PRO_0000436614" description="TBC1 domain family member 21">
    <location>
        <begin position="1"/>
        <end position="336"/>
    </location>
</feature>
<feature type="domain" description="Rab-GAP TBC" evidence="2">
    <location>
        <begin position="57"/>
        <end position="265"/>
    </location>
</feature>
<feature type="sequence conflict" description="In Ref. 4; AAI45240." evidence="8" ref="4">
    <original>KG</original>
    <variation>R</variation>
    <location>
        <begin position="226"/>
        <end position="227"/>
    </location>
</feature>
<dbReference type="EMBL" id="AK007086">
    <property type="protein sequence ID" value="BAB24855.1"/>
    <property type="molecule type" value="mRNA"/>
</dbReference>
<dbReference type="EMBL" id="AC139320">
    <property type="status" value="NOT_ANNOTATED_CDS"/>
    <property type="molecule type" value="Genomic_DNA"/>
</dbReference>
<dbReference type="EMBL" id="CH466522">
    <property type="protein sequence ID" value="EDL25950.1"/>
    <property type="molecule type" value="Genomic_DNA"/>
</dbReference>
<dbReference type="EMBL" id="BC100468">
    <property type="protein sequence ID" value="AAI00469.1"/>
    <property type="molecule type" value="mRNA"/>
</dbReference>
<dbReference type="EMBL" id="BC132329">
    <property type="protein sequence ID" value="AAI32330.1"/>
    <property type="molecule type" value="mRNA"/>
</dbReference>
<dbReference type="EMBL" id="BC145239">
    <property type="protein sequence ID" value="AAI45240.1"/>
    <property type="molecule type" value="mRNA"/>
</dbReference>
<dbReference type="EMBL" id="BC138332">
    <property type="protein sequence ID" value="AAI38333.1"/>
    <property type="molecule type" value="mRNA"/>
</dbReference>
<dbReference type="CCDS" id="CCDS40655.1"/>
<dbReference type="RefSeq" id="NP_083130.1">
    <property type="nucleotide sequence ID" value="NM_028854.4"/>
</dbReference>
<dbReference type="SMR" id="Q9D9D3"/>
<dbReference type="FunCoup" id="Q9D9D3">
    <property type="interactions" value="14"/>
</dbReference>
<dbReference type="STRING" id="10090.ENSMUSP00000037525"/>
<dbReference type="iPTMnet" id="Q9D9D3"/>
<dbReference type="PhosphoSitePlus" id="Q9D9D3"/>
<dbReference type="SwissPalm" id="Q9D9D3"/>
<dbReference type="PaxDb" id="10090-ENSMUSP00000037525"/>
<dbReference type="ProteomicsDB" id="263131"/>
<dbReference type="Antibodypedia" id="26810">
    <property type="antibodies" value="273 antibodies from 21 providers"/>
</dbReference>
<dbReference type="Ensembl" id="ENSMUST00000040217.6">
    <property type="protein sequence ID" value="ENSMUSP00000037525.5"/>
    <property type="gene ID" value="ENSMUSG00000036244.6"/>
</dbReference>
<dbReference type="GeneID" id="74286"/>
<dbReference type="KEGG" id="mmu:74286"/>
<dbReference type="UCSC" id="uc009pww.1">
    <property type="organism name" value="mouse"/>
</dbReference>
<dbReference type="UCSC" id="uc012gun.1">
    <property type="organism name" value="mouse"/>
</dbReference>
<dbReference type="AGR" id="MGI:1921536"/>
<dbReference type="CTD" id="161514"/>
<dbReference type="MGI" id="MGI:1921536">
    <property type="gene designation" value="Tbc1d21"/>
</dbReference>
<dbReference type="VEuPathDB" id="HostDB:ENSMUSG00000036244"/>
<dbReference type="eggNOG" id="KOG2197">
    <property type="taxonomic scope" value="Eukaryota"/>
</dbReference>
<dbReference type="GeneTree" id="ENSGT00730000111374"/>
<dbReference type="HOGENOM" id="CLU_071309_0_0_1"/>
<dbReference type="InParanoid" id="Q9D9D3"/>
<dbReference type="OMA" id="NIACDIQ"/>
<dbReference type="OrthoDB" id="10264062at2759"/>
<dbReference type="PhylomeDB" id="Q9D9D3"/>
<dbReference type="TreeFam" id="TF352573"/>
<dbReference type="BioGRID-ORCS" id="74286">
    <property type="hits" value="2 hits in 76 CRISPR screens"/>
</dbReference>
<dbReference type="PRO" id="PR:Q9D9D3"/>
<dbReference type="Proteomes" id="UP000000589">
    <property type="component" value="Chromosome 9"/>
</dbReference>
<dbReference type="RNAct" id="Q9D9D3">
    <property type="molecule type" value="protein"/>
</dbReference>
<dbReference type="Bgee" id="ENSMUSG00000036244">
    <property type="expression patterns" value="Expressed in spermatid and 6 other cell types or tissues"/>
</dbReference>
<dbReference type="ExpressionAtlas" id="Q9D9D3">
    <property type="expression patterns" value="baseline and differential"/>
</dbReference>
<dbReference type="GO" id="GO:0001669">
    <property type="term" value="C:acrosomal vesicle"/>
    <property type="evidence" value="ECO:0000314"/>
    <property type="project" value="MGI"/>
</dbReference>
<dbReference type="GO" id="GO:0005856">
    <property type="term" value="C:cytoskeleton"/>
    <property type="evidence" value="ECO:0007669"/>
    <property type="project" value="UniProtKB-SubCell"/>
</dbReference>
<dbReference type="GO" id="GO:0097225">
    <property type="term" value="C:sperm midpiece"/>
    <property type="evidence" value="ECO:0000314"/>
    <property type="project" value="UniProtKB"/>
</dbReference>
<dbReference type="GO" id="GO:0003779">
    <property type="term" value="F:actin binding"/>
    <property type="evidence" value="ECO:0000314"/>
    <property type="project" value="MGI"/>
</dbReference>
<dbReference type="GO" id="GO:0005096">
    <property type="term" value="F:GTPase activator activity"/>
    <property type="evidence" value="ECO:0000250"/>
    <property type="project" value="UniProtKB"/>
</dbReference>
<dbReference type="GO" id="GO:0031267">
    <property type="term" value="F:small GTPase binding"/>
    <property type="evidence" value="ECO:0007669"/>
    <property type="project" value="Ensembl"/>
</dbReference>
<dbReference type="GO" id="GO:0030317">
    <property type="term" value="P:flagellated sperm motility"/>
    <property type="evidence" value="ECO:0000315"/>
    <property type="project" value="UniProtKB"/>
</dbReference>
<dbReference type="GO" id="GO:0007288">
    <property type="term" value="P:sperm axoneme assembly"/>
    <property type="evidence" value="ECO:0000315"/>
    <property type="project" value="UniProtKB"/>
</dbReference>
<dbReference type="GO" id="GO:0120317">
    <property type="term" value="P:sperm mitochondrial sheath assembly"/>
    <property type="evidence" value="ECO:0000315"/>
    <property type="project" value="UniProtKB"/>
</dbReference>
<dbReference type="GO" id="GO:0007283">
    <property type="term" value="P:spermatogenesis"/>
    <property type="evidence" value="ECO:0000315"/>
    <property type="project" value="UniProtKB"/>
</dbReference>
<dbReference type="FunFam" id="1.10.472.80:FF:000037">
    <property type="entry name" value="TBC1 domain family member 21"/>
    <property type="match status" value="1"/>
</dbReference>
<dbReference type="FunFam" id="1.10.8.270:FF:000029">
    <property type="entry name" value="TBC1 domain family member 21"/>
    <property type="match status" value="1"/>
</dbReference>
<dbReference type="Gene3D" id="1.10.8.270">
    <property type="entry name" value="putative rabgap domain of human tbc1 domain family member 14 like domains"/>
    <property type="match status" value="1"/>
</dbReference>
<dbReference type="Gene3D" id="1.10.472.80">
    <property type="entry name" value="Ypt/Rab-GAP domain of gyp1p, domain 3"/>
    <property type="match status" value="1"/>
</dbReference>
<dbReference type="InterPro" id="IPR000195">
    <property type="entry name" value="Rab-GAP-TBC_dom"/>
</dbReference>
<dbReference type="InterPro" id="IPR035969">
    <property type="entry name" value="Rab-GAP_TBC_sf"/>
</dbReference>
<dbReference type="PANTHER" id="PTHR22957:SF489">
    <property type="entry name" value="TBC1 DOMAIN FAMILY MEMBER 21"/>
    <property type="match status" value="1"/>
</dbReference>
<dbReference type="PANTHER" id="PTHR22957">
    <property type="entry name" value="TBC1 DOMAIN FAMILY MEMBER GTPASE-ACTIVATING PROTEIN"/>
    <property type="match status" value="1"/>
</dbReference>
<dbReference type="Pfam" id="PF00566">
    <property type="entry name" value="RabGAP-TBC"/>
    <property type="match status" value="1"/>
</dbReference>
<dbReference type="SMART" id="SM00164">
    <property type="entry name" value="TBC"/>
    <property type="match status" value="1"/>
</dbReference>
<dbReference type="SUPFAM" id="SSF47923">
    <property type="entry name" value="Ypt/Rab-GAP domain of gyp1p"/>
    <property type="match status" value="2"/>
</dbReference>
<dbReference type="PROSITE" id="PS50086">
    <property type="entry name" value="TBC_RABGAP"/>
    <property type="match status" value="1"/>
</dbReference>
<reference evidence="12" key="1">
    <citation type="journal article" date="2005" name="Science">
        <title>The transcriptional landscape of the mammalian genome.</title>
        <authorList>
            <person name="Carninci P."/>
            <person name="Kasukawa T."/>
            <person name="Katayama S."/>
            <person name="Gough J."/>
            <person name="Frith M.C."/>
            <person name="Maeda N."/>
            <person name="Oyama R."/>
            <person name="Ravasi T."/>
            <person name="Lenhard B."/>
            <person name="Wells C."/>
            <person name="Kodzius R."/>
            <person name="Shimokawa K."/>
            <person name="Bajic V.B."/>
            <person name="Brenner S.E."/>
            <person name="Batalov S."/>
            <person name="Forrest A.R."/>
            <person name="Zavolan M."/>
            <person name="Davis M.J."/>
            <person name="Wilming L.G."/>
            <person name="Aidinis V."/>
            <person name="Allen J.E."/>
            <person name="Ambesi-Impiombato A."/>
            <person name="Apweiler R."/>
            <person name="Aturaliya R.N."/>
            <person name="Bailey T.L."/>
            <person name="Bansal M."/>
            <person name="Baxter L."/>
            <person name="Beisel K.W."/>
            <person name="Bersano T."/>
            <person name="Bono H."/>
            <person name="Chalk A.M."/>
            <person name="Chiu K.P."/>
            <person name="Choudhary V."/>
            <person name="Christoffels A."/>
            <person name="Clutterbuck D.R."/>
            <person name="Crowe M.L."/>
            <person name="Dalla E."/>
            <person name="Dalrymple B.P."/>
            <person name="de Bono B."/>
            <person name="Della Gatta G."/>
            <person name="di Bernardo D."/>
            <person name="Down T."/>
            <person name="Engstrom P."/>
            <person name="Fagiolini M."/>
            <person name="Faulkner G."/>
            <person name="Fletcher C.F."/>
            <person name="Fukushima T."/>
            <person name="Furuno M."/>
            <person name="Futaki S."/>
            <person name="Gariboldi M."/>
            <person name="Georgii-Hemming P."/>
            <person name="Gingeras T.R."/>
            <person name="Gojobori T."/>
            <person name="Green R.E."/>
            <person name="Gustincich S."/>
            <person name="Harbers M."/>
            <person name="Hayashi Y."/>
            <person name="Hensch T.K."/>
            <person name="Hirokawa N."/>
            <person name="Hill D."/>
            <person name="Huminiecki L."/>
            <person name="Iacono M."/>
            <person name="Ikeo K."/>
            <person name="Iwama A."/>
            <person name="Ishikawa T."/>
            <person name="Jakt M."/>
            <person name="Kanapin A."/>
            <person name="Katoh M."/>
            <person name="Kawasawa Y."/>
            <person name="Kelso J."/>
            <person name="Kitamura H."/>
            <person name="Kitano H."/>
            <person name="Kollias G."/>
            <person name="Krishnan S.P."/>
            <person name="Kruger A."/>
            <person name="Kummerfeld S.K."/>
            <person name="Kurochkin I.V."/>
            <person name="Lareau L.F."/>
            <person name="Lazarevic D."/>
            <person name="Lipovich L."/>
            <person name="Liu J."/>
            <person name="Liuni S."/>
            <person name="McWilliam S."/>
            <person name="Madan Babu M."/>
            <person name="Madera M."/>
            <person name="Marchionni L."/>
            <person name="Matsuda H."/>
            <person name="Matsuzawa S."/>
            <person name="Miki H."/>
            <person name="Mignone F."/>
            <person name="Miyake S."/>
            <person name="Morris K."/>
            <person name="Mottagui-Tabar S."/>
            <person name="Mulder N."/>
            <person name="Nakano N."/>
            <person name="Nakauchi H."/>
            <person name="Ng P."/>
            <person name="Nilsson R."/>
            <person name="Nishiguchi S."/>
            <person name="Nishikawa S."/>
            <person name="Nori F."/>
            <person name="Ohara O."/>
            <person name="Okazaki Y."/>
            <person name="Orlando V."/>
            <person name="Pang K.C."/>
            <person name="Pavan W.J."/>
            <person name="Pavesi G."/>
            <person name="Pesole G."/>
            <person name="Petrovsky N."/>
            <person name="Piazza S."/>
            <person name="Reed J."/>
            <person name="Reid J.F."/>
            <person name="Ring B.Z."/>
            <person name="Ringwald M."/>
            <person name="Rost B."/>
            <person name="Ruan Y."/>
            <person name="Salzberg S.L."/>
            <person name="Sandelin A."/>
            <person name="Schneider C."/>
            <person name="Schoenbach C."/>
            <person name="Sekiguchi K."/>
            <person name="Semple C.A."/>
            <person name="Seno S."/>
            <person name="Sessa L."/>
            <person name="Sheng Y."/>
            <person name="Shibata Y."/>
            <person name="Shimada H."/>
            <person name="Shimada K."/>
            <person name="Silva D."/>
            <person name="Sinclair B."/>
            <person name="Sperling S."/>
            <person name="Stupka E."/>
            <person name="Sugiura K."/>
            <person name="Sultana R."/>
            <person name="Takenaka Y."/>
            <person name="Taki K."/>
            <person name="Tammoja K."/>
            <person name="Tan S.L."/>
            <person name="Tang S."/>
            <person name="Taylor M.S."/>
            <person name="Tegner J."/>
            <person name="Teichmann S.A."/>
            <person name="Ueda H.R."/>
            <person name="van Nimwegen E."/>
            <person name="Verardo R."/>
            <person name="Wei C.L."/>
            <person name="Yagi K."/>
            <person name="Yamanishi H."/>
            <person name="Zabarovsky E."/>
            <person name="Zhu S."/>
            <person name="Zimmer A."/>
            <person name="Hide W."/>
            <person name="Bult C."/>
            <person name="Grimmond S.M."/>
            <person name="Teasdale R.D."/>
            <person name="Liu E.T."/>
            <person name="Brusic V."/>
            <person name="Quackenbush J."/>
            <person name="Wahlestedt C."/>
            <person name="Mattick J.S."/>
            <person name="Hume D.A."/>
            <person name="Kai C."/>
            <person name="Sasaki D."/>
            <person name="Tomaru Y."/>
            <person name="Fukuda S."/>
            <person name="Kanamori-Katayama M."/>
            <person name="Suzuki M."/>
            <person name="Aoki J."/>
            <person name="Arakawa T."/>
            <person name="Iida J."/>
            <person name="Imamura K."/>
            <person name="Itoh M."/>
            <person name="Kato T."/>
            <person name="Kawaji H."/>
            <person name="Kawagashira N."/>
            <person name="Kawashima T."/>
            <person name="Kojima M."/>
            <person name="Kondo S."/>
            <person name="Konno H."/>
            <person name="Nakano K."/>
            <person name="Ninomiya N."/>
            <person name="Nishio T."/>
            <person name="Okada M."/>
            <person name="Plessy C."/>
            <person name="Shibata K."/>
            <person name="Shiraki T."/>
            <person name="Suzuki S."/>
            <person name="Tagami M."/>
            <person name="Waki K."/>
            <person name="Watahiki A."/>
            <person name="Okamura-Oho Y."/>
            <person name="Suzuki H."/>
            <person name="Kawai J."/>
            <person name="Hayashizaki Y."/>
        </authorList>
    </citation>
    <scope>NUCLEOTIDE SEQUENCE [LARGE SCALE MRNA]</scope>
    <source>
        <strain evidence="12">C57BL/6J</strain>
        <tissue evidence="12">Testis</tissue>
    </source>
</reference>
<reference evidence="15" key="2">
    <citation type="journal article" date="2009" name="PLoS Biol.">
        <title>Lineage-specific biology revealed by a finished genome assembly of the mouse.</title>
        <authorList>
            <person name="Church D.M."/>
            <person name="Goodstadt L."/>
            <person name="Hillier L.W."/>
            <person name="Zody M.C."/>
            <person name="Goldstein S."/>
            <person name="She X."/>
            <person name="Bult C.J."/>
            <person name="Agarwala R."/>
            <person name="Cherry J.L."/>
            <person name="DiCuccio M."/>
            <person name="Hlavina W."/>
            <person name="Kapustin Y."/>
            <person name="Meric P."/>
            <person name="Maglott D."/>
            <person name="Birtle Z."/>
            <person name="Marques A.C."/>
            <person name="Graves T."/>
            <person name="Zhou S."/>
            <person name="Teague B."/>
            <person name="Potamousis K."/>
            <person name="Churas C."/>
            <person name="Place M."/>
            <person name="Herschleb J."/>
            <person name="Runnheim R."/>
            <person name="Forrest D."/>
            <person name="Amos-Landgraf J."/>
            <person name="Schwartz D.C."/>
            <person name="Cheng Z."/>
            <person name="Lindblad-Toh K."/>
            <person name="Eichler E.E."/>
            <person name="Ponting C.P."/>
        </authorList>
    </citation>
    <scope>NUCLEOTIDE SEQUENCE [LARGE SCALE GENOMIC DNA]</scope>
    <source>
        <strain evidence="15">C57BL/6J</strain>
    </source>
</reference>
<reference evidence="13" key="3">
    <citation type="submission" date="2005-07" db="EMBL/GenBank/DDBJ databases">
        <authorList>
            <person name="Mural R.J."/>
            <person name="Adams M.D."/>
            <person name="Myers E.W."/>
            <person name="Smith H.O."/>
            <person name="Venter J.C."/>
        </authorList>
    </citation>
    <scope>NUCLEOTIDE SEQUENCE [LARGE SCALE GENOMIC DNA]</scope>
</reference>
<reference evidence="10" key="4">
    <citation type="journal article" date="2004" name="Genome Res.">
        <title>The status, quality, and expansion of the NIH full-length cDNA project: the Mammalian Gene Collection (MGC).</title>
        <authorList>
            <consortium name="The MGC Project Team"/>
        </authorList>
    </citation>
    <scope>NUCLEOTIDE SEQUENCE [LARGE SCALE MRNA]</scope>
    <source>
        <tissue evidence="10">Testis</tissue>
    </source>
</reference>
<reference evidence="8" key="5">
    <citation type="journal article" date="2011" name="Int. J. Androl.">
        <title>Identification and characterization of a novel Rab GTPase-activating protein in spermatids.</title>
        <authorList>
            <person name="Lin Y.H."/>
            <person name="Lin Y.M."/>
            <person name="Kuo Y.C."/>
            <person name="Wang Y.Y."/>
            <person name="Kuo P.L."/>
        </authorList>
    </citation>
    <scope>FUNCTION</scope>
    <scope>INTERACTION WITH ACTB</scope>
    <scope>SUBCELLULAR LOCATION</scope>
    <scope>TISSUE SPECIFICITY</scope>
    <scope>DEVELOPMENTAL STAGE</scope>
</reference>
<reference key="6">
    <citation type="journal article" date="2018" name="Int. J. Mol. Sci.">
        <title>TBC1D21 Potentially Interacts with and Regulates Rap1 during Murine Spermatogenesis.</title>
        <authorList>
            <person name="Ke C.C."/>
            <person name="Lin Y.H."/>
            <person name="Wang Y.Y."/>
            <person name="Wu Y.Y."/>
            <person name="Chen M.F."/>
            <person name="Ku W.C."/>
            <person name="Chiang H.S."/>
            <person name="Lai T.H."/>
        </authorList>
    </citation>
    <scope>FUNCTION</scope>
    <scope>INTERACTION WITH RAP1A</scope>
    <scope>TISSUE SPECIFICITY</scope>
    <scope>DEVELOPMENTAL STAGE</scope>
</reference>
<reference key="7">
    <citation type="journal article" date="2020" name="PLoS Genet.">
        <title>Deficiency of the Tbc1d21 gene causes male infertility with morphological abnormalities of the sperm mitochondria and flagellum in mice.</title>
        <authorList>
            <person name="Wang Y.Y."/>
            <person name="Ke C.C."/>
            <person name="Chen Y.L."/>
            <person name="Lin Y.H."/>
            <person name="Yu I.S."/>
            <person name="Ku W.C."/>
            <person name="O'Bryan M.K."/>
            <person name="Lin Y.H."/>
        </authorList>
    </citation>
    <scope>FUNCTION</scope>
    <scope>DISRUPTION PHENOTYPE</scope>
    <scope>INTERACTION WITH TOMM20 AND DNAH7</scope>
    <scope>TISSUE SPECIFICITY</scope>
</reference>
<reference key="8">
    <citation type="journal article" date="2021" name="Proc. Natl. Acad. Sci. U.S.A.">
        <title>ARMC12 regulates spatiotemporal mitochondrial dynamics during spermiogenesis and is required for male fertility.</title>
        <authorList>
            <person name="Shimada K."/>
            <person name="Park S."/>
            <person name="Miyata H."/>
            <person name="Yu Z."/>
            <person name="Morohoshi A."/>
            <person name="Oura S."/>
            <person name="Matzuk M.M."/>
            <person name="Ikawa M."/>
        </authorList>
    </citation>
    <scope>FUNCTION</scope>
    <scope>DISRUPTION PHENOTYPE</scope>
    <scope>INTERACTION WITH ARMC12</scope>
    <scope>TISSUE SPECIFICITY</scope>
</reference>